<sequence length="305" mass="32877">MELIFLGTSAGVPTRSRNVTAILLHLQHPTQPGVWLFDCGEGTQHQMLNTAFHPGKLERIFISHLHGDHLFGLPGLLCSRSMAGNPHPLTVYGPQGVREFIATTLRLSGSWTDFPLQIEEISAGDILDDGLRKVTAFRLEHPLECYGYRVVEHDKPGALNARALKAAGVTPGPLFQALKAGKTVTLADGRQINGADYLAPAVAGKSVAIFGDTAPCEAALALAQGVDVMVHETTLDASMEEKANARGHSSTRQTATLAREAAVGRLIMTHISSRYDDKGCQRLLAECRAIFPATELAYDFSVFPV</sequence>
<name>RBN_SALPB</name>
<accession>A9N598</accession>
<organism>
    <name type="scientific">Salmonella paratyphi B (strain ATCC BAA-1250 / SPB7)</name>
    <dbReference type="NCBI Taxonomy" id="1016998"/>
    <lineage>
        <taxon>Bacteria</taxon>
        <taxon>Pseudomonadati</taxon>
        <taxon>Pseudomonadota</taxon>
        <taxon>Gammaproteobacteria</taxon>
        <taxon>Enterobacterales</taxon>
        <taxon>Enterobacteriaceae</taxon>
        <taxon>Salmonella</taxon>
    </lineage>
</organism>
<reference key="1">
    <citation type="submission" date="2007-11" db="EMBL/GenBank/DDBJ databases">
        <authorList>
            <consortium name="The Salmonella enterica serovar Paratyphi B Genome Sequencing Project"/>
            <person name="McClelland M."/>
            <person name="Sanderson E.K."/>
            <person name="Porwollik S."/>
            <person name="Spieth J."/>
            <person name="Clifton W.S."/>
            <person name="Fulton R."/>
            <person name="Cordes M."/>
            <person name="Wollam A."/>
            <person name="Shah N."/>
            <person name="Pepin K."/>
            <person name="Bhonagiri V."/>
            <person name="Nash W."/>
            <person name="Johnson M."/>
            <person name="Thiruvilangam P."/>
            <person name="Wilson R."/>
        </authorList>
    </citation>
    <scope>NUCLEOTIDE SEQUENCE [LARGE SCALE GENOMIC DNA]</scope>
    <source>
        <strain>ATCC BAA-1250 / SPB7</strain>
    </source>
</reference>
<keyword id="KW-0255">Endonuclease</keyword>
<keyword id="KW-0269">Exonuclease</keyword>
<keyword id="KW-0378">Hydrolase</keyword>
<keyword id="KW-0479">Metal-binding</keyword>
<keyword id="KW-0540">Nuclease</keyword>
<keyword id="KW-0819">tRNA processing</keyword>
<keyword id="KW-0862">Zinc</keyword>
<gene>
    <name evidence="1" type="primary">rbn</name>
    <name type="synonym">rnz</name>
    <name type="ordered locus">SPAB_00668</name>
</gene>
<proteinExistence type="inferred from homology"/>
<evidence type="ECO:0000255" key="1">
    <source>
        <dbReference type="HAMAP-Rule" id="MF_01818"/>
    </source>
</evidence>
<protein>
    <recommendedName>
        <fullName evidence="1">Ribonuclease BN</fullName>
        <shortName evidence="1">RNase BN</shortName>
        <ecNumber evidence="1">3.1.-.-</ecNumber>
    </recommendedName>
    <alternativeName>
        <fullName evidence="1">Ribonuclease Z homolog</fullName>
        <shortName evidence="1">RNase Z homolog</shortName>
    </alternativeName>
</protein>
<comment type="function">
    <text evidence="1">Zinc phosphodiesterase, which has both exoribonuclease and endoribonuclease activities.</text>
</comment>
<comment type="cofactor">
    <cofactor evidence="1">
        <name>Zn(2+)</name>
        <dbReference type="ChEBI" id="CHEBI:29105"/>
    </cofactor>
    <text evidence="1">Binds 2 Zn(2+) ions.</text>
</comment>
<comment type="subunit">
    <text evidence="1">Homodimer.</text>
</comment>
<comment type="similarity">
    <text evidence="1">Belongs to the RNase Z family. RNase BN subfamily.</text>
</comment>
<dbReference type="EC" id="3.1.-.-" evidence="1"/>
<dbReference type="EMBL" id="CP000886">
    <property type="protein sequence ID" value="ABX66094.1"/>
    <property type="molecule type" value="Genomic_DNA"/>
</dbReference>
<dbReference type="RefSeq" id="WP_000419093.1">
    <property type="nucleotide sequence ID" value="NC_010102.1"/>
</dbReference>
<dbReference type="SMR" id="A9N598"/>
<dbReference type="KEGG" id="spq:SPAB_00668"/>
<dbReference type="PATRIC" id="fig|1016998.12.peg.628"/>
<dbReference type="HOGENOM" id="CLU_031317_2_0_6"/>
<dbReference type="BioCyc" id="SENT1016998:SPAB_RS02770-MONOMER"/>
<dbReference type="Proteomes" id="UP000008556">
    <property type="component" value="Chromosome"/>
</dbReference>
<dbReference type="GO" id="GO:0042781">
    <property type="term" value="F:3'-tRNA processing endoribonuclease activity"/>
    <property type="evidence" value="ECO:0007669"/>
    <property type="project" value="TreeGrafter"/>
</dbReference>
<dbReference type="GO" id="GO:0004527">
    <property type="term" value="F:exonuclease activity"/>
    <property type="evidence" value="ECO:0007669"/>
    <property type="project" value="UniProtKB-UniRule"/>
</dbReference>
<dbReference type="GO" id="GO:0008270">
    <property type="term" value="F:zinc ion binding"/>
    <property type="evidence" value="ECO:0007669"/>
    <property type="project" value="UniProtKB-UniRule"/>
</dbReference>
<dbReference type="CDD" id="cd07717">
    <property type="entry name" value="RNaseZ_ZiPD-like_MBL-fold"/>
    <property type="match status" value="1"/>
</dbReference>
<dbReference type="FunFam" id="3.60.15.10:FF:000002">
    <property type="entry name" value="Ribonuclease Z"/>
    <property type="match status" value="1"/>
</dbReference>
<dbReference type="Gene3D" id="3.60.15.10">
    <property type="entry name" value="Ribonuclease Z/Hydroxyacylglutathione hydrolase-like"/>
    <property type="match status" value="1"/>
</dbReference>
<dbReference type="HAMAP" id="MF_01818">
    <property type="entry name" value="RNase_Z_BN"/>
    <property type="match status" value="1"/>
</dbReference>
<dbReference type="InterPro" id="IPR001279">
    <property type="entry name" value="Metallo-B-lactamas"/>
</dbReference>
<dbReference type="InterPro" id="IPR036866">
    <property type="entry name" value="RibonucZ/Hydroxyglut_hydro"/>
</dbReference>
<dbReference type="InterPro" id="IPR013469">
    <property type="entry name" value="Rnase_BN"/>
</dbReference>
<dbReference type="InterPro" id="IPR013471">
    <property type="entry name" value="RNase_Z/BN"/>
</dbReference>
<dbReference type="NCBIfam" id="NF000800">
    <property type="entry name" value="PRK00055.1-1"/>
    <property type="match status" value="1"/>
</dbReference>
<dbReference type="NCBIfam" id="NF000801">
    <property type="entry name" value="PRK00055.1-3"/>
    <property type="match status" value="1"/>
</dbReference>
<dbReference type="NCBIfam" id="TIGR02651">
    <property type="entry name" value="RNase_Z"/>
    <property type="match status" value="1"/>
</dbReference>
<dbReference type="NCBIfam" id="TIGR02649">
    <property type="entry name" value="true_RNase_BN"/>
    <property type="match status" value="1"/>
</dbReference>
<dbReference type="PANTHER" id="PTHR46018">
    <property type="entry name" value="ZINC PHOSPHODIESTERASE ELAC PROTEIN 1"/>
    <property type="match status" value="1"/>
</dbReference>
<dbReference type="PANTHER" id="PTHR46018:SF2">
    <property type="entry name" value="ZINC PHOSPHODIESTERASE ELAC PROTEIN 1"/>
    <property type="match status" value="1"/>
</dbReference>
<dbReference type="Pfam" id="PF12706">
    <property type="entry name" value="Lactamase_B_2"/>
    <property type="match status" value="2"/>
</dbReference>
<dbReference type="SUPFAM" id="SSF56281">
    <property type="entry name" value="Metallo-hydrolase/oxidoreductase"/>
    <property type="match status" value="1"/>
</dbReference>
<feature type="chain" id="PRO_1000088341" description="Ribonuclease BN">
    <location>
        <begin position="1"/>
        <end position="305"/>
    </location>
</feature>
<feature type="active site" description="Proton acceptor" evidence="1">
    <location>
        <position position="68"/>
    </location>
</feature>
<feature type="binding site" evidence="1">
    <location>
        <position position="64"/>
    </location>
    <ligand>
        <name>Zn(2+)</name>
        <dbReference type="ChEBI" id="CHEBI:29105"/>
        <label>1</label>
        <note>catalytic</note>
    </ligand>
</feature>
<feature type="binding site" evidence="1">
    <location>
        <position position="66"/>
    </location>
    <ligand>
        <name>Zn(2+)</name>
        <dbReference type="ChEBI" id="CHEBI:29105"/>
        <label>1</label>
        <note>catalytic</note>
    </ligand>
</feature>
<feature type="binding site" evidence="1">
    <location>
        <position position="68"/>
    </location>
    <ligand>
        <name>Zn(2+)</name>
        <dbReference type="ChEBI" id="CHEBI:29105"/>
        <label>2</label>
        <note>catalytic</note>
    </ligand>
</feature>
<feature type="binding site" evidence="1">
    <location>
        <position position="69"/>
    </location>
    <ligand>
        <name>Zn(2+)</name>
        <dbReference type="ChEBI" id="CHEBI:29105"/>
        <label>2</label>
        <note>catalytic</note>
    </ligand>
</feature>
<feature type="binding site" evidence="1">
    <location>
        <position position="141"/>
    </location>
    <ligand>
        <name>Zn(2+)</name>
        <dbReference type="ChEBI" id="CHEBI:29105"/>
        <label>1</label>
        <note>catalytic</note>
    </ligand>
</feature>
<feature type="binding site" evidence="1">
    <location>
        <position position="212"/>
    </location>
    <ligand>
        <name>Zn(2+)</name>
        <dbReference type="ChEBI" id="CHEBI:29105"/>
        <label>1</label>
        <note>catalytic</note>
    </ligand>
</feature>
<feature type="binding site" evidence="1">
    <location>
        <position position="212"/>
    </location>
    <ligand>
        <name>Zn(2+)</name>
        <dbReference type="ChEBI" id="CHEBI:29105"/>
        <label>2</label>
        <note>catalytic</note>
    </ligand>
</feature>
<feature type="binding site" evidence="1">
    <location>
        <position position="270"/>
    </location>
    <ligand>
        <name>Zn(2+)</name>
        <dbReference type="ChEBI" id="CHEBI:29105"/>
        <label>2</label>
        <note>catalytic</note>
    </ligand>
</feature>